<reference key="1">
    <citation type="journal article" date="1999" name="Nature">
        <title>Sequence and analysis of chromosome 4 of the plant Arabidopsis thaliana.</title>
        <authorList>
            <person name="Mayer K.F.X."/>
            <person name="Schueller C."/>
            <person name="Wambutt R."/>
            <person name="Murphy G."/>
            <person name="Volckaert G."/>
            <person name="Pohl T."/>
            <person name="Duesterhoeft A."/>
            <person name="Stiekema W."/>
            <person name="Entian K.-D."/>
            <person name="Terryn N."/>
            <person name="Harris B."/>
            <person name="Ansorge W."/>
            <person name="Brandt P."/>
            <person name="Grivell L.A."/>
            <person name="Rieger M."/>
            <person name="Weichselgartner M."/>
            <person name="de Simone V."/>
            <person name="Obermaier B."/>
            <person name="Mache R."/>
            <person name="Mueller M."/>
            <person name="Kreis M."/>
            <person name="Delseny M."/>
            <person name="Puigdomenech P."/>
            <person name="Watson M."/>
            <person name="Schmidtheini T."/>
            <person name="Reichert B."/>
            <person name="Portetelle D."/>
            <person name="Perez-Alonso M."/>
            <person name="Boutry M."/>
            <person name="Bancroft I."/>
            <person name="Vos P."/>
            <person name="Hoheisel J."/>
            <person name="Zimmermann W."/>
            <person name="Wedler H."/>
            <person name="Ridley P."/>
            <person name="Langham S.-A."/>
            <person name="McCullagh B."/>
            <person name="Bilham L."/>
            <person name="Robben J."/>
            <person name="van der Schueren J."/>
            <person name="Grymonprez B."/>
            <person name="Chuang Y.-J."/>
            <person name="Vandenbussche F."/>
            <person name="Braeken M."/>
            <person name="Weltjens I."/>
            <person name="Voet M."/>
            <person name="Bastiaens I."/>
            <person name="Aert R."/>
            <person name="Defoor E."/>
            <person name="Weitzenegger T."/>
            <person name="Bothe G."/>
            <person name="Ramsperger U."/>
            <person name="Hilbert H."/>
            <person name="Braun M."/>
            <person name="Holzer E."/>
            <person name="Brandt A."/>
            <person name="Peters S."/>
            <person name="van Staveren M."/>
            <person name="Dirkse W."/>
            <person name="Mooijman P."/>
            <person name="Klein Lankhorst R."/>
            <person name="Rose M."/>
            <person name="Hauf J."/>
            <person name="Koetter P."/>
            <person name="Berneiser S."/>
            <person name="Hempel S."/>
            <person name="Feldpausch M."/>
            <person name="Lamberth S."/>
            <person name="Van den Daele H."/>
            <person name="De Keyser A."/>
            <person name="Buysshaert C."/>
            <person name="Gielen J."/>
            <person name="Villarroel R."/>
            <person name="De Clercq R."/>
            <person name="van Montagu M."/>
            <person name="Rogers J."/>
            <person name="Cronin A."/>
            <person name="Quail M.A."/>
            <person name="Bray-Allen S."/>
            <person name="Clark L."/>
            <person name="Doggett J."/>
            <person name="Hall S."/>
            <person name="Kay M."/>
            <person name="Lennard N."/>
            <person name="McLay K."/>
            <person name="Mayes R."/>
            <person name="Pettett A."/>
            <person name="Rajandream M.A."/>
            <person name="Lyne M."/>
            <person name="Benes V."/>
            <person name="Rechmann S."/>
            <person name="Borkova D."/>
            <person name="Bloecker H."/>
            <person name="Scharfe M."/>
            <person name="Grimm M."/>
            <person name="Loehnert T.-H."/>
            <person name="Dose S."/>
            <person name="de Haan M."/>
            <person name="Maarse A.C."/>
            <person name="Schaefer M."/>
            <person name="Mueller-Auer S."/>
            <person name="Gabel C."/>
            <person name="Fuchs M."/>
            <person name="Fartmann B."/>
            <person name="Granderath K."/>
            <person name="Dauner D."/>
            <person name="Herzl A."/>
            <person name="Neumann S."/>
            <person name="Argiriou A."/>
            <person name="Vitale D."/>
            <person name="Liguori R."/>
            <person name="Piravandi E."/>
            <person name="Massenet O."/>
            <person name="Quigley F."/>
            <person name="Clabauld G."/>
            <person name="Muendlein A."/>
            <person name="Felber R."/>
            <person name="Schnabl S."/>
            <person name="Hiller R."/>
            <person name="Schmidt W."/>
            <person name="Lecharny A."/>
            <person name="Aubourg S."/>
            <person name="Chefdor F."/>
            <person name="Cooke R."/>
            <person name="Berger C."/>
            <person name="Monfort A."/>
            <person name="Casacuberta E."/>
            <person name="Gibbons T."/>
            <person name="Weber N."/>
            <person name="Vandenbol M."/>
            <person name="Bargues M."/>
            <person name="Terol J."/>
            <person name="Torres A."/>
            <person name="Perez-Perez A."/>
            <person name="Purnelle B."/>
            <person name="Bent E."/>
            <person name="Johnson S."/>
            <person name="Tacon D."/>
            <person name="Jesse T."/>
            <person name="Heijnen L."/>
            <person name="Schwarz S."/>
            <person name="Scholler P."/>
            <person name="Heber S."/>
            <person name="Francs P."/>
            <person name="Bielke C."/>
            <person name="Frishman D."/>
            <person name="Haase D."/>
            <person name="Lemcke K."/>
            <person name="Mewes H.-W."/>
            <person name="Stocker S."/>
            <person name="Zaccaria P."/>
            <person name="Bevan M."/>
            <person name="Wilson R.K."/>
            <person name="de la Bastide M."/>
            <person name="Habermann K."/>
            <person name="Parnell L."/>
            <person name="Dedhia N."/>
            <person name="Gnoj L."/>
            <person name="Schutz K."/>
            <person name="Huang E."/>
            <person name="Spiegel L."/>
            <person name="Sekhon M."/>
            <person name="Murray J."/>
            <person name="Sheet P."/>
            <person name="Cordes M."/>
            <person name="Abu-Threideh J."/>
            <person name="Stoneking T."/>
            <person name="Kalicki J."/>
            <person name="Graves T."/>
            <person name="Harmon G."/>
            <person name="Edwards J."/>
            <person name="Latreille P."/>
            <person name="Courtney L."/>
            <person name="Cloud J."/>
            <person name="Abbott A."/>
            <person name="Scott K."/>
            <person name="Johnson D."/>
            <person name="Minx P."/>
            <person name="Bentley D."/>
            <person name="Fulton B."/>
            <person name="Miller N."/>
            <person name="Greco T."/>
            <person name="Kemp K."/>
            <person name="Kramer J."/>
            <person name="Fulton L."/>
            <person name="Mardis E."/>
            <person name="Dante M."/>
            <person name="Pepin K."/>
            <person name="Hillier L.W."/>
            <person name="Nelson J."/>
            <person name="Spieth J."/>
            <person name="Ryan E."/>
            <person name="Andrews S."/>
            <person name="Geisel C."/>
            <person name="Layman D."/>
            <person name="Du H."/>
            <person name="Ali J."/>
            <person name="Berghoff A."/>
            <person name="Jones K."/>
            <person name="Drone K."/>
            <person name="Cotton M."/>
            <person name="Joshu C."/>
            <person name="Antonoiu B."/>
            <person name="Zidanic M."/>
            <person name="Strong C."/>
            <person name="Sun H."/>
            <person name="Lamar B."/>
            <person name="Yordan C."/>
            <person name="Ma P."/>
            <person name="Zhong J."/>
            <person name="Preston R."/>
            <person name="Vil D."/>
            <person name="Shekher M."/>
            <person name="Matero A."/>
            <person name="Shah R."/>
            <person name="Swaby I.K."/>
            <person name="O'Shaughnessy A."/>
            <person name="Rodriguez M."/>
            <person name="Hoffman J."/>
            <person name="Till S."/>
            <person name="Granat S."/>
            <person name="Shohdy N."/>
            <person name="Hasegawa A."/>
            <person name="Hameed A."/>
            <person name="Lodhi M."/>
            <person name="Johnson A."/>
            <person name="Chen E."/>
            <person name="Marra M.A."/>
            <person name="Martienssen R."/>
            <person name="McCombie W.R."/>
        </authorList>
    </citation>
    <scope>NUCLEOTIDE SEQUENCE [LARGE SCALE GENOMIC DNA]</scope>
    <source>
        <strain>cv. Columbia</strain>
    </source>
</reference>
<reference key="2">
    <citation type="journal article" date="2017" name="Plant J.">
        <title>Araport11: a complete reannotation of the Arabidopsis thaliana reference genome.</title>
        <authorList>
            <person name="Cheng C.Y."/>
            <person name="Krishnakumar V."/>
            <person name="Chan A.P."/>
            <person name="Thibaud-Nissen F."/>
            <person name="Schobel S."/>
            <person name="Town C.D."/>
        </authorList>
    </citation>
    <scope>GENOME REANNOTATION</scope>
    <source>
        <strain>cv. Columbia</strain>
    </source>
</reference>
<reference key="3">
    <citation type="journal article" date="2002" name="Genome Biol.">
        <title>Evaluation and classification of RING-finger domains encoded by the Arabidopsis genome.</title>
        <authorList>
            <person name="Kosarev P."/>
            <person name="Mayer K.F.X."/>
            <person name="Hardtke C.S."/>
        </authorList>
    </citation>
    <scope>GENE FAMILY ORGANIZATION</scope>
</reference>
<reference key="4">
    <citation type="journal article" date="2006" name="J. Mol. Evol.">
        <title>The ATL gene family from Arabidopsis thaliana and Oryza sativa comprises a large number of putative ubiquitin ligases of the RING-H2 type.</title>
        <authorList>
            <person name="Serrano M."/>
            <person name="Parra S."/>
            <person name="Alcaraz L.D."/>
            <person name="Guzman P."/>
        </authorList>
    </citation>
    <scope>NOMENCLATURE</scope>
    <scope>GENE FAMILY ORGANIZATION</scope>
</reference>
<evidence type="ECO:0000250" key="1"/>
<evidence type="ECO:0000255" key="2"/>
<evidence type="ECO:0000255" key="3">
    <source>
        <dbReference type="PROSITE-ProRule" id="PRU00175"/>
    </source>
</evidence>
<evidence type="ECO:0000305" key="4"/>
<name>ATL53_ARATH</name>
<sequence>MESDPNPSAWNQYINPRDCTQGLCSTFCPQWCTYINFSPPPISYEQFLNDGVASNPNLSPLVIAIFGIFATAFLLAAYYTLVSKYCANDTTNEAASESGRSDIILDVNSPERGDQDDPFALESSTAGLDDTLIKKIGFFKLKKHQNGFKINGTDCSICLGEFNEDESLRLLPKCNHTFHVVCIDRWLKSHSNCPLCRAKIIVPTTQQPEHHVVVMNLDRFTSNVGSAEGNVVVDDHREEVSVSISSHHPSWFSAADIVLRISRDGEEEEGNYDLENGNREKLVDLKRSFSSGGLVLGTQGRTRRSLNICP</sequence>
<feature type="chain" id="PRO_0000055802" description="Putative RING-H2 finger protein ATL53">
    <location>
        <begin position="1"/>
        <end position="310"/>
    </location>
</feature>
<feature type="transmembrane region" description="Helical" evidence="2">
    <location>
        <begin position="62"/>
        <end position="82"/>
    </location>
</feature>
<feature type="zinc finger region" description="RING-type; atypical" evidence="3">
    <location>
        <begin position="155"/>
        <end position="197"/>
    </location>
</feature>
<accession>P0C041</accession>
<accession>O49690</accession>
<comment type="catalytic activity">
    <reaction evidence="4">
        <text>S-ubiquitinyl-[E2 ubiquitin-conjugating enzyme]-L-cysteine + [acceptor protein]-L-lysine = [E2 ubiquitin-conjugating enzyme]-L-cysteine + N(6)-ubiquitinyl-[acceptor protein]-L-lysine.</text>
        <dbReference type="EC" id="2.3.2.27"/>
    </reaction>
</comment>
<comment type="pathway">
    <text>Protein modification; protein ubiquitination.</text>
</comment>
<comment type="subcellular location">
    <subcellularLocation>
        <location evidence="4">Membrane</location>
        <topology evidence="4">Single-pass membrane protein</topology>
    </subcellularLocation>
</comment>
<comment type="domain">
    <text evidence="1">The RING-type zinc finger domain mediates binding to an E2 ubiquitin-conjugating enzyme.</text>
</comment>
<comment type="similarity">
    <text evidence="4">Belongs to the RING-type zinc finger family. ATL subfamily.</text>
</comment>
<comment type="sequence caution" evidence="4">
    <conflict type="erroneous gene model prediction">
        <sequence resource="EMBL-CDS" id="CAA17134"/>
    </conflict>
    <text>The predicted gene has been split into 3 genes: At4g17905, At4g17910 and At4g17915.</text>
</comment>
<comment type="sequence caution" evidence="4">
    <conflict type="erroneous gene model prediction">
        <sequence resource="EMBL-CDS" id="CAB78793"/>
    </conflict>
    <text>The predicted gene has been split into 3 genes: At4g17905, At4g17910 and At4g17915.</text>
</comment>
<protein>
    <recommendedName>
        <fullName>Putative RING-H2 finger protein ATL53</fullName>
        <ecNumber evidence="4">2.3.2.27</ecNumber>
    </recommendedName>
    <alternativeName>
        <fullName evidence="4">RING-type E3 ubiquitin transferase ATL53</fullName>
    </alternativeName>
</protein>
<proteinExistence type="inferred from homology"/>
<organism>
    <name type="scientific">Arabidopsis thaliana</name>
    <name type="common">Mouse-ear cress</name>
    <dbReference type="NCBI Taxonomy" id="3702"/>
    <lineage>
        <taxon>Eukaryota</taxon>
        <taxon>Viridiplantae</taxon>
        <taxon>Streptophyta</taxon>
        <taxon>Embryophyta</taxon>
        <taxon>Tracheophyta</taxon>
        <taxon>Spermatophyta</taxon>
        <taxon>Magnoliopsida</taxon>
        <taxon>eudicotyledons</taxon>
        <taxon>Gunneridae</taxon>
        <taxon>Pentapetalae</taxon>
        <taxon>rosids</taxon>
        <taxon>malvids</taxon>
        <taxon>Brassicales</taxon>
        <taxon>Brassicaceae</taxon>
        <taxon>Camelineae</taxon>
        <taxon>Arabidopsis</taxon>
    </lineage>
</organism>
<dbReference type="EC" id="2.3.2.27" evidence="4"/>
<dbReference type="EMBL" id="AL021889">
    <property type="protein sequence ID" value="CAA17134.1"/>
    <property type="status" value="ALT_SEQ"/>
    <property type="molecule type" value="Genomic_DNA"/>
</dbReference>
<dbReference type="EMBL" id="AL161547">
    <property type="protein sequence ID" value="CAB78793.1"/>
    <property type="status" value="ALT_SEQ"/>
    <property type="molecule type" value="Genomic_DNA"/>
</dbReference>
<dbReference type="EMBL" id="CP002687">
    <property type="protein sequence ID" value="AEE83966.1"/>
    <property type="molecule type" value="Genomic_DNA"/>
</dbReference>
<dbReference type="PIR" id="T05077">
    <property type="entry name" value="T05077"/>
</dbReference>
<dbReference type="SMR" id="P0C041"/>
<dbReference type="FunCoup" id="P0C041">
    <property type="interactions" value="1"/>
</dbReference>
<dbReference type="STRING" id="3702.P0C041"/>
<dbReference type="PaxDb" id="3702-AT4G17905.1"/>
<dbReference type="EnsemblPlants" id="AT4G17905.1">
    <property type="protein sequence ID" value="AT4G17905.1"/>
    <property type="gene ID" value="AT4G17905"/>
</dbReference>
<dbReference type="Gramene" id="AT4G17905.1">
    <property type="protein sequence ID" value="AT4G17905.1"/>
    <property type="gene ID" value="AT4G17905"/>
</dbReference>
<dbReference type="KEGG" id="ath:AT4G17905"/>
<dbReference type="Araport" id="AT4G17905"/>
<dbReference type="TAIR" id="AT4G17905">
    <property type="gene designation" value="ATL4H"/>
</dbReference>
<dbReference type="eggNOG" id="KOG0800">
    <property type="taxonomic scope" value="Eukaryota"/>
</dbReference>
<dbReference type="HOGENOM" id="CLU_040108_0_1_1"/>
<dbReference type="InParanoid" id="P0C041"/>
<dbReference type="PhylomeDB" id="P0C041"/>
<dbReference type="UniPathway" id="UPA00143"/>
<dbReference type="PRO" id="PR:P0C041"/>
<dbReference type="Proteomes" id="UP000006548">
    <property type="component" value="Chromosome 4"/>
</dbReference>
<dbReference type="ExpressionAtlas" id="P0C041">
    <property type="expression patterns" value="baseline and differential"/>
</dbReference>
<dbReference type="GO" id="GO:0016020">
    <property type="term" value="C:membrane"/>
    <property type="evidence" value="ECO:0007669"/>
    <property type="project" value="UniProtKB-SubCell"/>
</dbReference>
<dbReference type="GO" id="GO:0016740">
    <property type="term" value="F:transferase activity"/>
    <property type="evidence" value="ECO:0007669"/>
    <property type="project" value="UniProtKB-KW"/>
</dbReference>
<dbReference type="GO" id="GO:0008270">
    <property type="term" value="F:zinc ion binding"/>
    <property type="evidence" value="ECO:0007669"/>
    <property type="project" value="UniProtKB-KW"/>
</dbReference>
<dbReference type="GO" id="GO:0016567">
    <property type="term" value="P:protein ubiquitination"/>
    <property type="evidence" value="ECO:0007669"/>
    <property type="project" value="UniProtKB-UniPathway"/>
</dbReference>
<dbReference type="CDD" id="cd16461">
    <property type="entry name" value="RING-H2_EL5-like"/>
    <property type="match status" value="1"/>
</dbReference>
<dbReference type="Gene3D" id="3.30.40.10">
    <property type="entry name" value="Zinc/RING finger domain, C3HC4 (zinc finger)"/>
    <property type="match status" value="1"/>
</dbReference>
<dbReference type="InterPro" id="IPR044600">
    <property type="entry name" value="ATL1/ATL16-like"/>
</dbReference>
<dbReference type="InterPro" id="IPR001841">
    <property type="entry name" value="Znf_RING"/>
</dbReference>
<dbReference type="InterPro" id="IPR013083">
    <property type="entry name" value="Znf_RING/FYVE/PHD"/>
</dbReference>
<dbReference type="PANTHER" id="PTHR46913">
    <property type="entry name" value="RING-H2 FINGER PROTEIN ATL16"/>
    <property type="match status" value="1"/>
</dbReference>
<dbReference type="PANTHER" id="PTHR46913:SF22">
    <property type="entry name" value="RING-TYPE E3 UBIQUITIN TRANSFERASE"/>
    <property type="match status" value="1"/>
</dbReference>
<dbReference type="Pfam" id="PF13639">
    <property type="entry name" value="zf-RING_2"/>
    <property type="match status" value="1"/>
</dbReference>
<dbReference type="SMART" id="SM01197">
    <property type="entry name" value="FANCL_C"/>
    <property type="match status" value="1"/>
</dbReference>
<dbReference type="SMART" id="SM00184">
    <property type="entry name" value="RING"/>
    <property type="match status" value="1"/>
</dbReference>
<dbReference type="SUPFAM" id="SSF57850">
    <property type="entry name" value="RING/U-box"/>
    <property type="match status" value="1"/>
</dbReference>
<dbReference type="PROSITE" id="PS50089">
    <property type="entry name" value="ZF_RING_2"/>
    <property type="match status" value="1"/>
</dbReference>
<gene>
    <name type="primary">ATL53</name>
    <name type="ordered locus">At4g17905</name>
    <name type="ORF">T6K21.90</name>
</gene>
<keyword id="KW-0472">Membrane</keyword>
<keyword id="KW-0479">Metal-binding</keyword>
<keyword id="KW-1185">Reference proteome</keyword>
<keyword id="KW-0808">Transferase</keyword>
<keyword id="KW-0812">Transmembrane</keyword>
<keyword id="KW-1133">Transmembrane helix</keyword>
<keyword id="KW-0833">Ubl conjugation pathway</keyword>
<keyword id="KW-0862">Zinc</keyword>
<keyword id="KW-0863">Zinc-finger</keyword>